<accession>B2K421</accession>
<gene>
    <name evidence="1" type="primary">pyrB</name>
    <name type="ordered locus">YPTS_3717</name>
</gene>
<reference key="1">
    <citation type="submission" date="2008-04" db="EMBL/GenBank/DDBJ databases">
        <title>Complete sequence of Yersinia pseudotuberculosis PB1/+.</title>
        <authorList>
            <person name="Copeland A."/>
            <person name="Lucas S."/>
            <person name="Lapidus A."/>
            <person name="Glavina del Rio T."/>
            <person name="Dalin E."/>
            <person name="Tice H."/>
            <person name="Bruce D."/>
            <person name="Goodwin L."/>
            <person name="Pitluck S."/>
            <person name="Munk A.C."/>
            <person name="Brettin T."/>
            <person name="Detter J.C."/>
            <person name="Han C."/>
            <person name="Tapia R."/>
            <person name="Schmutz J."/>
            <person name="Larimer F."/>
            <person name="Land M."/>
            <person name="Hauser L."/>
            <person name="Challacombe J.F."/>
            <person name="Green L."/>
            <person name="Lindler L.E."/>
            <person name="Nikolich M.P."/>
            <person name="Richardson P."/>
        </authorList>
    </citation>
    <scope>NUCLEOTIDE SEQUENCE [LARGE SCALE GENOMIC DNA]</scope>
    <source>
        <strain>PB1/+</strain>
    </source>
</reference>
<keyword id="KW-0665">Pyrimidine biosynthesis</keyword>
<keyword id="KW-0808">Transferase</keyword>
<proteinExistence type="inferred from homology"/>
<evidence type="ECO:0000255" key="1">
    <source>
        <dbReference type="HAMAP-Rule" id="MF_00001"/>
    </source>
</evidence>
<organism>
    <name type="scientific">Yersinia pseudotuberculosis serotype IB (strain PB1/+)</name>
    <dbReference type="NCBI Taxonomy" id="502801"/>
    <lineage>
        <taxon>Bacteria</taxon>
        <taxon>Pseudomonadati</taxon>
        <taxon>Pseudomonadota</taxon>
        <taxon>Gammaproteobacteria</taxon>
        <taxon>Enterobacterales</taxon>
        <taxon>Yersiniaceae</taxon>
        <taxon>Yersinia</taxon>
    </lineage>
</organism>
<comment type="function">
    <text evidence="1">Catalyzes the condensation of carbamoyl phosphate and aspartate to form carbamoyl aspartate and inorganic phosphate, the committed step in the de novo pyrimidine nucleotide biosynthesis pathway.</text>
</comment>
<comment type="catalytic activity">
    <reaction evidence="1">
        <text>carbamoyl phosphate + L-aspartate = N-carbamoyl-L-aspartate + phosphate + H(+)</text>
        <dbReference type="Rhea" id="RHEA:20013"/>
        <dbReference type="ChEBI" id="CHEBI:15378"/>
        <dbReference type="ChEBI" id="CHEBI:29991"/>
        <dbReference type="ChEBI" id="CHEBI:32814"/>
        <dbReference type="ChEBI" id="CHEBI:43474"/>
        <dbReference type="ChEBI" id="CHEBI:58228"/>
        <dbReference type="EC" id="2.1.3.2"/>
    </reaction>
</comment>
<comment type="pathway">
    <text evidence="1">Pyrimidine metabolism; UMP biosynthesis via de novo pathway; (S)-dihydroorotate from bicarbonate: step 2/3.</text>
</comment>
<comment type="subunit">
    <text evidence="1">Heterododecamer (2C3:3R2) of six catalytic PyrB chains organized as two trimers (C3), and six regulatory PyrI chains organized as three dimers (R2).</text>
</comment>
<comment type="similarity">
    <text evidence="1">Belongs to the aspartate/ornithine carbamoyltransferase superfamily. ATCase family.</text>
</comment>
<feature type="chain" id="PRO_1000088817" description="Aspartate carbamoyltransferase catalytic subunit">
    <location>
        <begin position="1"/>
        <end position="311"/>
    </location>
</feature>
<feature type="binding site" evidence="1">
    <location>
        <position position="55"/>
    </location>
    <ligand>
        <name>carbamoyl phosphate</name>
        <dbReference type="ChEBI" id="CHEBI:58228"/>
    </ligand>
</feature>
<feature type="binding site" evidence="1">
    <location>
        <position position="56"/>
    </location>
    <ligand>
        <name>carbamoyl phosphate</name>
        <dbReference type="ChEBI" id="CHEBI:58228"/>
    </ligand>
</feature>
<feature type="binding site" evidence="1">
    <location>
        <position position="85"/>
    </location>
    <ligand>
        <name>L-aspartate</name>
        <dbReference type="ChEBI" id="CHEBI:29991"/>
    </ligand>
</feature>
<feature type="binding site" evidence="1">
    <location>
        <position position="106"/>
    </location>
    <ligand>
        <name>carbamoyl phosphate</name>
        <dbReference type="ChEBI" id="CHEBI:58228"/>
    </ligand>
</feature>
<feature type="binding site" evidence="1">
    <location>
        <position position="135"/>
    </location>
    <ligand>
        <name>carbamoyl phosphate</name>
        <dbReference type="ChEBI" id="CHEBI:58228"/>
    </ligand>
</feature>
<feature type="binding site" evidence="1">
    <location>
        <position position="138"/>
    </location>
    <ligand>
        <name>carbamoyl phosphate</name>
        <dbReference type="ChEBI" id="CHEBI:58228"/>
    </ligand>
</feature>
<feature type="binding site" evidence="1">
    <location>
        <position position="168"/>
    </location>
    <ligand>
        <name>L-aspartate</name>
        <dbReference type="ChEBI" id="CHEBI:29991"/>
    </ligand>
</feature>
<feature type="binding site" evidence="1">
    <location>
        <position position="230"/>
    </location>
    <ligand>
        <name>L-aspartate</name>
        <dbReference type="ChEBI" id="CHEBI:29991"/>
    </ligand>
</feature>
<feature type="binding site" evidence="1">
    <location>
        <position position="268"/>
    </location>
    <ligand>
        <name>carbamoyl phosphate</name>
        <dbReference type="ChEBI" id="CHEBI:58228"/>
    </ligand>
</feature>
<feature type="binding site" evidence="1">
    <location>
        <position position="269"/>
    </location>
    <ligand>
        <name>carbamoyl phosphate</name>
        <dbReference type="ChEBI" id="CHEBI:58228"/>
    </ligand>
</feature>
<sequence length="311" mass="34589">MTNPLYHKHIISINDLSRDELELVLRTAASLKKTPQPELLKHKVIASCFFEASTRTRLSFETSIHRLGASVVGFSDSSNTSLGKKGETLADTMSVISTYVDAIVMRHPQEGASRLAAQFSGNVPIVNAGDGANQHPTQTLLDLFTIQETQGRLDNINIAMVGDLKYGRTVHSLTQALAKFNGNHFFFIAPDALAMPAYILQMLEEKEIEYSLHESLEEVVPELDILYMTRVQKERLDPSEYANVKAQFILRSSDLTGARDNLKVLHPLPRIDEITTDVDKTPYAYYFQQAGNGIFARQALLALVLNAELAL</sequence>
<dbReference type="EC" id="2.1.3.2" evidence="1"/>
<dbReference type="EMBL" id="CP001048">
    <property type="protein sequence ID" value="ACC90670.1"/>
    <property type="molecule type" value="Genomic_DNA"/>
</dbReference>
<dbReference type="RefSeq" id="WP_011193148.1">
    <property type="nucleotide sequence ID" value="NZ_CP009780.1"/>
</dbReference>
<dbReference type="SMR" id="B2K421"/>
<dbReference type="KEGG" id="ypb:YPTS_3717"/>
<dbReference type="PATRIC" id="fig|502801.10.peg.3175"/>
<dbReference type="UniPathway" id="UPA00070">
    <property type="reaction ID" value="UER00116"/>
</dbReference>
<dbReference type="GO" id="GO:0005829">
    <property type="term" value="C:cytosol"/>
    <property type="evidence" value="ECO:0007669"/>
    <property type="project" value="TreeGrafter"/>
</dbReference>
<dbReference type="GO" id="GO:0016597">
    <property type="term" value="F:amino acid binding"/>
    <property type="evidence" value="ECO:0007669"/>
    <property type="project" value="InterPro"/>
</dbReference>
<dbReference type="GO" id="GO:0004070">
    <property type="term" value="F:aspartate carbamoyltransferase activity"/>
    <property type="evidence" value="ECO:0007669"/>
    <property type="project" value="UniProtKB-UniRule"/>
</dbReference>
<dbReference type="GO" id="GO:0006207">
    <property type="term" value="P:'de novo' pyrimidine nucleobase biosynthetic process"/>
    <property type="evidence" value="ECO:0007669"/>
    <property type="project" value="InterPro"/>
</dbReference>
<dbReference type="GO" id="GO:0044205">
    <property type="term" value="P:'de novo' UMP biosynthetic process"/>
    <property type="evidence" value="ECO:0007669"/>
    <property type="project" value="UniProtKB-UniRule"/>
</dbReference>
<dbReference type="GO" id="GO:0006520">
    <property type="term" value="P:amino acid metabolic process"/>
    <property type="evidence" value="ECO:0007669"/>
    <property type="project" value="InterPro"/>
</dbReference>
<dbReference type="FunFam" id="3.40.50.1370:FF:000001">
    <property type="entry name" value="Aspartate carbamoyltransferase"/>
    <property type="match status" value="1"/>
</dbReference>
<dbReference type="FunFam" id="3.40.50.1370:FF:000002">
    <property type="entry name" value="Aspartate carbamoyltransferase 2"/>
    <property type="match status" value="1"/>
</dbReference>
<dbReference type="Gene3D" id="3.40.50.1370">
    <property type="entry name" value="Aspartate/ornithine carbamoyltransferase"/>
    <property type="match status" value="2"/>
</dbReference>
<dbReference type="HAMAP" id="MF_00001">
    <property type="entry name" value="Asp_carb_tr"/>
    <property type="match status" value="1"/>
</dbReference>
<dbReference type="InterPro" id="IPR006132">
    <property type="entry name" value="Asp/Orn_carbamoyltranf_P-bd"/>
</dbReference>
<dbReference type="InterPro" id="IPR006130">
    <property type="entry name" value="Asp/Orn_carbamoylTrfase"/>
</dbReference>
<dbReference type="InterPro" id="IPR036901">
    <property type="entry name" value="Asp/Orn_carbamoylTrfase_sf"/>
</dbReference>
<dbReference type="InterPro" id="IPR002082">
    <property type="entry name" value="Asp_carbamoyltransf"/>
</dbReference>
<dbReference type="InterPro" id="IPR006131">
    <property type="entry name" value="Asp_carbamoyltransf_Asp/Orn-bd"/>
</dbReference>
<dbReference type="NCBIfam" id="TIGR00670">
    <property type="entry name" value="asp_carb_tr"/>
    <property type="match status" value="1"/>
</dbReference>
<dbReference type="NCBIfam" id="NF002032">
    <property type="entry name" value="PRK00856.1"/>
    <property type="match status" value="1"/>
</dbReference>
<dbReference type="PANTHER" id="PTHR45753:SF6">
    <property type="entry name" value="ASPARTATE CARBAMOYLTRANSFERASE"/>
    <property type="match status" value="1"/>
</dbReference>
<dbReference type="PANTHER" id="PTHR45753">
    <property type="entry name" value="ORNITHINE CARBAMOYLTRANSFERASE, MITOCHONDRIAL"/>
    <property type="match status" value="1"/>
</dbReference>
<dbReference type="Pfam" id="PF00185">
    <property type="entry name" value="OTCace"/>
    <property type="match status" value="1"/>
</dbReference>
<dbReference type="Pfam" id="PF02729">
    <property type="entry name" value="OTCace_N"/>
    <property type="match status" value="1"/>
</dbReference>
<dbReference type="PRINTS" id="PR00100">
    <property type="entry name" value="AOTCASE"/>
</dbReference>
<dbReference type="PRINTS" id="PR00101">
    <property type="entry name" value="ATCASE"/>
</dbReference>
<dbReference type="SUPFAM" id="SSF53671">
    <property type="entry name" value="Aspartate/ornithine carbamoyltransferase"/>
    <property type="match status" value="1"/>
</dbReference>
<dbReference type="PROSITE" id="PS00097">
    <property type="entry name" value="CARBAMOYLTRANSFERASE"/>
    <property type="match status" value="1"/>
</dbReference>
<protein>
    <recommendedName>
        <fullName evidence="1">Aspartate carbamoyltransferase catalytic subunit</fullName>
        <ecNumber evidence="1">2.1.3.2</ecNumber>
    </recommendedName>
    <alternativeName>
        <fullName evidence="1">Aspartate transcarbamylase</fullName>
        <shortName evidence="1">ATCase</shortName>
    </alternativeName>
</protein>
<name>PYRB_YERPB</name>